<proteinExistence type="inferred from homology"/>
<reference key="1">
    <citation type="journal article" date="2003" name="Nat. Biotechnol.">
        <title>The genome sequence of the entomopathogenic bacterium Photorhabdus luminescens.</title>
        <authorList>
            <person name="Duchaud E."/>
            <person name="Rusniok C."/>
            <person name="Frangeul L."/>
            <person name="Buchrieser C."/>
            <person name="Givaudan A."/>
            <person name="Taourit S."/>
            <person name="Bocs S."/>
            <person name="Boursaux-Eude C."/>
            <person name="Chandler M."/>
            <person name="Charles J.-F."/>
            <person name="Dassa E."/>
            <person name="Derose R."/>
            <person name="Derzelle S."/>
            <person name="Freyssinet G."/>
            <person name="Gaudriault S."/>
            <person name="Medigue C."/>
            <person name="Lanois A."/>
            <person name="Powell K."/>
            <person name="Siguier P."/>
            <person name="Vincent R."/>
            <person name="Wingate V."/>
            <person name="Zouine M."/>
            <person name="Glaser P."/>
            <person name="Boemare N."/>
            <person name="Danchin A."/>
            <person name="Kunst F."/>
        </authorList>
    </citation>
    <scope>NUCLEOTIDE SEQUENCE [LARGE SCALE GENOMIC DNA]</scope>
    <source>
        <strain>DSM 15139 / CIP 105565 / TT01</strain>
    </source>
</reference>
<protein>
    <recommendedName>
        <fullName evidence="1">Putative manganese efflux pump MntP</fullName>
    </recommendedName>
</protein>
<name>MNTP_PHOLL</name>
<comment type="function">
    <text evidence="1">Probably functions as a manganese efflux pump.</text>
</comment>
<comment type="subcellular location">
    <subcellularLocation>
        <location evidence="1">Cell inner membrane</location>
        <topology evidence="1">Multi-pass membrane protein</topology>
    </subcellularLocation>
</comment>
<comment type="similarity">
    <text evidence="1">Belongs to the MntP (TC 9.B.29) family.</text>
</comment>
<gene>
    <name evidence="1" type="primary">mntP</name>
    <name type="ordered locus">plu2701</name>
</gene>
<keyword id="KW-0997">Cell inner membrane</keyword>
<keyword id="KW-1003">Cell membrane</keyword>
<keyword id="KW-0406">Ion transport</keyword>
<keyword id="KW-0464">Manganese</keyword>
<keyword id="KW-0472">Membrane</keyword>
<keyword id="KW-1185">Reference proteome</keyword>
<keyword id="KW-0812">Transmembrane</keyword>
<keyword id="KW-1133">Transmembrane helix</keyword>
<keyword id="KW-0813">Transport</keyword>
<organism>
    <name type="scientific">Photorhabdus laumondii subsp. laumondii (strain DSM 15139 / CIP 105565 / TT01)</name>
    <name type="common">Photorhabdus luminescens subsp. laumondii</name>
    <dbReference type="NCBI Taxonomy" id="243265"/>
    <lineage>
        <taxon>Bacteria</taxon>
        <taxon>Pseudomonadati</taxon>
        <taxon>Pseudomonadota</taxon>
        <taxon>Gammaproteobacteria</taxon>
        <taxon>Enterobacterales</taxon>
        <taxon>Morganellaceae</taxon>
        <taxon>Photorhabdus</taxon>
    </lineage>
</organism>
<sequence length="193" mass="21245">MNMYATLILALALSMDAFAASICKGAALHRPHFREAIRTGLIFGLAEACTPLIGWSLGLYASQYIIEWDHWVAFTLLFILGCRMITESFKTKQEKKCESPCRHNSIVLITTAIATSLDAMAIGIGLAFLEVNIVHTAMAIGMMTMIMATLGMLIGRYIGPRLGKRAELIGGLILIAIGFNILFEHLELFMYAK</sequence>
<feature type="chain" id="PRO_0000155660" description="Putative manganese efflux pump MntP">
    <location>
        <begin position="1"/>
        <end position="193"/>
    </location>
</feature>
<feature type="transmembrane region" description="Helical" evidence="1">
    <location>
        <begin position="3"/>
        <end position="23"/>
    </location>
</feature>
<feature type="transmembrane region" description="Helical" evidence="1">
    <location>
        <begin position="41"/>
        <end position="61"/>
    </location>
</feature>
<feature type="transmembrane region" description="Helical" evidence="1">
    <location>
        <begin position="65"/>
        <end position="85"/>
    </location>
</feature>
<feature type="transmembrane region" description="Helical" evidence="1">
    <location>
        <begin position="106"/>
        <end position="126"/>
    </location>
</feature>
<feature type="transmembrane region" description="Helical" evidence="1">
    <location>
        <begin position="133"/>
        <end position="153"/>
    </location>
</feature>
<feature type="transmembrane region" description="Helical" evidence="1">
    <location>
        <begin position="169"/>
        <end position="189"/>
    </location>
</feature>
<evidence type="ECO:0000255" key="1">
    <source>
        <dbReference type="HAMAP-Rule" id="MF_01521"/>
    </source>
</evidence>
<dbReference type="EMBL" id="BX571868">
    <property type="protein sequence ID" value="CAE15075.1"/>
    <property type="molecule type" value="Genomic_DNA"/>
</dbReference>
<dbReference type="RefSeq" id="WP_011146923.1">
    <property type="nucleotide sequence ID" value="NC_005126.1"/>
</dbReference>
<dbReference type="GeneID" id="48848964"/>
<dbReference type="KEGG" id="plu:plu2701"/>
<dbReference type="eggNOG" id="COG1971">
    <property type="taxonomic scope" value="Bacteria"/>
</dbReference>
<dbReference type="HOGENOM" id="CLU_096410_0_0_6"/>
<dbReference type="OrthoDB" id="9811590at2"/>
<dbReference type="Proteomes" id="UP000002514">
    <property type="component" value="Chromosome"/>
</dbReference>
<dbReference type="GO" id="GO:0005886">
    <property type="term" value="C:plasma membrane"/>
    <property type="evidence" value="ECO:0007669"/>
    <property type="project" value="UniProtKB-SubCell"/>
</dbReference>
<dbReference type="GO" id="GO:0005384">
    <property type="term" value="F:manganese ion transmembrane transporter activity"/>
    <property type="evidence" value="ECO:0007669"/>
    <property type="project" value="UniProtKB-UniRule"/>
</dbReference>
<dbReference type="HAMAP" id="MF_01521">
    <property type="entry name" value="MntP_pump"/>
    <property type="match status" value="1"/>
</dbReference>
<dbReference type="InterPro" id="IPR036259">
    <property type="entry name" value="MFS_trans_sf"/>
</dbReference>
<dbReference type="InterPro" id="IPR003810">
    <property type="entry name" value="Mntp/YtaF"/>
</dbReference>
<dbReference type="InterPro" id="IPR022929">
    <property type="entry name" value="Put_MntP"/>
</dbReference>
<dbReference type="NCBIfam" id="NF008546">
    <property type="entry name" value="PRK11469.1"/>
    <property type="match status" value="1"/>
</dbReference>
<dbReference type="PANTHER" id="PTHR35529">
    <property type="entry name" value="MANGANESE EFFLUX PUMP MNTP-RELATED"/>
    <property type="match status" value="1"/>
</dbReference>
<dbReference type="PANTHER" id="PTHR35529:SF1">
    <property type="entry name" value="MANGANESE EFFLUX PUMP MNTP-RELATED"/>
    <property type="match status" value="1"/>
</dbReference>
<dbReference type="Pfam" id="PF02659">
    <property type="entry name" value="Mntp"/>
    <property type="match status" value="1"/>
</dbReference>
<dbReference type="SUPFAM" id="SSF103473">
    <property type="entry name" value="MFS general substrate transporter"/>
    <property type="match status" value="1"/>
</dbReference>
<accession>Q7N3L4</accession>